<evidence type="ECO:0000255" key="1">
    <source>
        <dbReference type="HAMAP-Rule" id="MF_00255"/>
    </source>
</evidence>
<keyword id="KW-0030">Aminoacyl-tRNA synthetase</keyword>
<keyword id="KW-0067">ATP-binding</keyword>
<keyword id="KW-0963">Cytoplasm</keyword>
<keyword id="KW-0436">Ligase</keyword>
<keyword id="KW-0547">Nucleotide-binding</keyword>
<keyword id="KW-0648">Protein biosynthesis</keyword>
<organism>
    <name type="scientific">Streptococcus pyogenes serotype M49 (strain NZ131)</name>
    <dbReference type="NCBI Taxonomy" id="471876"/>
    <lineage>
        <taxon>Bacteria</taxon>
        <taxon>Bacillati</taxon>
        <taxon>Bacillota</taxon>
        <taxon>Bacilli</taxon>
        <taxon>Lactobacillales</taxon>
        <taxon>Streptococcaceae</taxon>
        <taxon>Streptococcus</taxon>
    </lineage>
</organism>
<accession>B5XMM9</accession>
<reference key="1">
    <citation type="journal article" date="2008" name="J. Bacteriol.">
        <title>Genome sequence of a nephritogenic and highly transformable M49 strain of Streptococcus pyogenes.</title>
        <authorList>
            <person name="McShan W.M."/>
            <person name="Ferretti J.J."/>
            <person name="Karasawa T."/>
            <person name="Suvorov A.N."/>
            <person name="Lin S."/>
            <person name="Qin B."/>
            <person name="Jia H."/>
            <person name="Kenton S."/>
            <person name="Najar F."/>
            <person name="Wu H."/>
            <person name="Scott J."/>
            <person name="Roe B.A."/>
            <person name="Savic D.J."/>
        </authorList>
    </citation>
    <scope>NUCLEOTIDE SEQUENCE [LARGE SCALE GENOMIC DNA]</scope>
    <source>
        <strain>NZ131</strain>
    </source>
</reference>
<feature type="chain" id="PRO_1000101357" description="Glycine--tRNA ligase beta subunit">
    <location>
        <begin position="1"/>
        <end position="679"/>
    </location>
</feature>
<sequence length="679" mass="75027">MSKNLLIELGLEELPAYVVTPSEKQLGERLATFLTENRLSFEDIQTFSTPRRLAVRVSGLADQQTDLTEDFKGPAKKIALDADGNFSKAAQGFVRGKGLTTDAIEFREVKGVEYVYVTKHEAGKPAKEVLLGVTEVLSAMTFPVSMHWANNSFEYIRPVHTLTVLLNDEALELDFLDIHSGRVSRGHRFLGTETTITSADSYEADLRSQFVIADAKERQEMIVEQIKTLEVEQGVQVDIDEDLLNEVLNLVEFPTAFMGSFEAKYLDVPEEVLVTSMKNHQRYFVVRDQAGHLMPNFVSVRNGNDQAIENVIKGNEKVLVARLEDGEFFWREDQKLQIADLVAKLTNVTFHEKIGSLAEHMDRTRVIAASLAKEANLSAEEVTAVDRAAQIYKFDLLTGMVGEFDELQGIMGEKYALLAGEDAAVARAIREHYLPDAAGGALPETKVGAVLALADKLDTLLSFFSVGLIPSGSNDPYALRRATQGIVRILDHFGWRIPMDKLVDSLYDLSFDSLTYANKADVMNFIRARVDKMMGKAAPKDIREAVLESSTFVVPEMLAAAEALVKASHTENYKPAVESLSRAFNLAEKADASVQVDPSLFENEQENTLSAAIQGLTLAGSAAQQLEQVFALSPVINDFFDNTMVMAEDQALKNNRLAILSDLVSKAKTIAAFNQLNTK</sequence>
<protein>
    <recommendedName>
        <fullName evidence="1">Glycine--tRNA ligase beta subunit</fullName>
        <ecNumber evidence="1">6.1.1.14</ecNumber>
    </recommendedName>
    <alternativeName>
        <fullName evidence="1">Glycyl-tRNA synthetase beta subunit</fullName>
        <shortName evidence="1">GlyRS</shortName>
    </alternativeName>
</protein>
<name>SYGB_STRPZ</name>
<comment type="catalytic activity">
    <reaction evidence="1">
        <text>tRNA(Gly) + glycine + ATP = glycyl-tRNA(Gly) + AMP + diphosphate</text>
        <dbReference type="Rhea" id="RHEA:16013"/>
        <dbReference type="Rhea" id="RHEA-COMP:9664"/>
        <dbReference type="Rhea" id="RHEA-COMP:9683"/>
        <dbReference type="ChEBI" id="CHEBI:30616"/>
        <dbReference type="ChEBI" id="CHEBI:33019"/>
        <dbReference type="ChEBI" id="CHEBI:57305"/>
        <dbReference type="ChEBI" id="CHEBI:78442"/>
        <dbReference type="ChEBI" id="CHEBI:78522"/>
        <dbReference type="ChEBI" id="CHEBI:456215"/>
        <dbReference type="EC" id="6.1.1.14"/>
    </reaction>
</comment>
<comment type="subunit">
    <text evidence="1">Tetramer of two alpha and two beta subunits.</text>
</comment>
<comment type="subcellular location">
    <subcellularLocation>
        <location evidence="1">Cytoplasm</location>
    </subcellularLocation>
</comment>
<comment type="similarity">
    <text evidence="1">Belongs to the class-II aminoacyl-tRNA synthetase family.</text>
</comment>
<proteinExistence type="inferred from homology"/>
<dbReference type="EC" id="6.1.1.14" evidence="1"/>
<dbReference type="EMBL" id="CP000829">
    <property type="protein sequence ID" value="ACI61591.1"/>
    <property type="molecule type" value="Genomic_DNA"/>
</dbReference>
<dbReference type="SMR" id="B5XMM9"/>
<dbReference type="KEGG" id="soz:Spy49_1310c"/>
<dbReference type="HOGENOM" id="CLU_007220_2_2_9"/>
<dbReference type="Proteomes" id="UP000001039">
    <property type="component" value="Chromosome"/>
</dbReference>
<dbReference type="GO" id="GO:0005829">
    <property type="term" value="C:cytosol"/>
    <property type="evidence" value="ECO:0007669"/>
    <property type="project" value="TreeGrafter"/>
</dbReference>
<dbReference type="GO" id="GO:0005524">
    <property type="term" value="F:ATP binding"/>
    <property type="evidence" value="ECO:0007669"/>
    <property type="project" value="UniProtKB-UniRule"/>
</dbReference>
<dbReference type="GO" id="GO:0004820">
    <property type="term" value="F:glycine-tRNA ligase activity"/>
    <property type="evidence" value="ECO:0007669"/>
    <property type="project" value="UniProtKB-UniRule"/>
</dbReference>
<dbReference type="GO" id="GO:0006426">
    <property type="term" value="P:glycyl-tRNA aminoacylation"/>
    <property type="evidence" value="ECO:0007669"/>
    <property type="project" value="UniProtKB-UniRule"/>
</dbReference>
<dbReference type="HAMAP" id="MF_00255">
    <property type="entry name" value="Gly_tRNA_synth_beta"/>
    <property type="match status" value="1"/>
</dbReference>
<dbReference type="InterPro" id="IPR015944">
    <property type="entry name" value="Gly-tRNA-synth_bsu"/>
</dbReference>
<dbReference type="InterPro" id="IPR006194">
    <property type="entry name" value="Gly-tRNA-synth_heterodimer"/>
</dbReference>
<dbReference type="NCBIfam" id="TIGR00211">
    <property type="entry name" value="glyS"/>
    <property type="match status" value="1"/>
</dbReference>
<dbReference type="PANTHER" id="PTHR30075:SF2">
    <property type="entry name" value="GLYCINE--TRNA LIGASE, CHLOROPLASTIC_MITOCHONDRIAL 2"/>
    <property type="match status" value="1"/>
</dbReference>
<dbReference type="PANTHER" id="PTHR30075">
    <property type="entry name" value="GLYCYL-TRNA SYNTHETASE"/>
    <property type="match status" value="1"/>
</dbReference>
<dbReference type="Pfam" id="PF02092">
    <property type="entry name" value="tRNA_synt_2f"/>
    <property type="match status" value="1"/>
</dbReference>
<dbReference type="PRINTS" id="PR01045">
    <property type="entry name" value="TRNASYNTHGB"/>
</dbReference>
<dbReference type="SUPFAM" id="SSF109604">
    <property type="entry name" value="HD-domain/PDEase-like"/>
    <property type="match status" value="1"/>
</dbReference>
<dbReference type="PROSITE" id="PS50861">
    <property type="entry name" value="AA_TRNA_LIGASE_II_GLYAB"/>
    <property type="match status" value="1"/>
</dbReference>
<gene>
    <name evidence="1" type="primary">glyS</name>
    <name type="ordered locus">Spy49_1310c</name>
</gene>